<comment type="function">
    <text evidence="1">Produces ATP from ADP in the presence of a proton gradient across the membrane. The catalytic sites are hosted primarily by the beta subunits.</text>
</comment>
<comment type="catalytic activity">
    <reaction evidence="1">
        <text>ATP + H2O + 4 H(+)(in) = ADP + phosphate + 5 H(+)(out)</text>
        <dbReference type="Rhea" id="RHEA:57720"/>
        <dbReference type="ChEBI" id="CHEBI:15377"/>
        <dbReference type="ChEBI" id="CHEBI:15378"/>
        <dbReference type="ChEBI" id="CHEBI:30616"/>
        <dbReference type="ChEBI" id="CHEBI:43474"/>
        <dbReference type="ChEBI" id="CHEBI:456216"/>
        <dbReference type="EC" id="7.1.2.2"/>
    </reaction>
</comment>
<comment type="subunit">
    <text evidence="1">F-type ATPases have 2 components, CF(1) - the catalytic core - and CF(0) - the membrane proton channel. CF(1) has five subunits: alpha(3), beta(3), gamma(1), delta(1), epsilon(1). CF(0) has three main subunits: a(1), b(2) and c(9-12). The alpha and beta chains form an alternating ring which encloses part of the gamma chain. CF(1) is attached to CF(0) by a central stalk formed by the gamma and epsilon chains, while a peripheral stalk is formed by the delta and b chains.</text>
</comment>
<comment type="subcellular location">
    <subcellularLocation>
        <location evidence="1">Cell inner membrane</location>
        <topology evidence="1">Peripheral membrane protein</topology>
    </subcellularLocation>
</comment>
<comment type="similarity">
    <text evidence="1">Belongs to the ATPase alpha/beta chains family.</text>
</comment>
<gene>
    <name evidence="1" type="primary">atpD</name>
    <name type="ordered locus">Tcr_2165</name>
</gene>
<accession>Q31DM0</accession>
<dbReference type="EC" id="7.1.2.2" evidence="1"/>
<dbReference type="EMBL" id="CP000109">
    <property type="protein sequence ID" value="ABB42753.1"/>
    <property type="molecule type" value="Genomic_DNA"/>
</dbReference>
<dbReference type="SMR" id="Q31DM0"/>
<dbReference type="STRING" id="317025.Tcr_2165"/>
<dbReference type="KEGG" id="tcx:Tcr_2165"/>
<dbReference type="eggNOG" id="COG0055">
    <property type="taxonomic scope" value="Bacteria"/>
</dbReference>
<dbReference type="HOGENOM" id="CLU_022398_0_2_6"/>
<dbReference type="OrthoDB" id="9801639at2"/>
<dbReference type="GO" id="GO:0005886">
    <property type="term" value="C:plasma membrane"/>
    <property type="evidence" value="ECO:0007669"/>
    <property type="project" value="UniProtKB-SubCell"/>
</dbReference>
<dbReference type="GO" id="GO:0045259">
    <property type="term" value="C:proton-transporting ATP synthase complex"/>
    <property type="evidence" value="ECO:0007669"/>
    <property type="project" value="UniProtKB-KW"/>
</dbReference>
<dbReference type="GO" id="GO:0005524">
    <property type="term" value="F:ATP binding"/>
    <property type="evidence" value="ECO:0007669"/>
    <property type="project" value="UniProtKB-UniRule"/>
</dbReference>
<dbReference type="GO" id="GO:0016887">
    <property type="term" value="F:ATP hydrolysis activity"/>
    <property type="evidence" value="ECO:0007669"/>
    <property type="project" value="InterPro"/>
</dbReference>
<dbReference type="GO" id="GO:0046933">
    <property type="term" value="F:proton-transporting ATP synthase activity, rotational mechanism"/>
    <property type="evidence" value="ECO:0007669"/>
    <property type="project" value="UniProtKB-UniRule"/>
</dbReference>
<dbReference type="CDD" id="cd18110">
    <property type="entry name" value="ATP-synt_F1_beta_C"/>
    <property type="match status" value="1"/>
</dbReference>
<dbReference type="CDD" id="cd18115">
    <property type="entry name" value="ATP-synt_F1_beta_N"/>
    <property type="match status" value="1"/>
</dbReference>
<dbReference type="CDD" id="cd01133">
    <property type="entry name" value="F1-ATPase_beta_CD"/>
    <property type="match status" value="1"/>
</dbReference>
<dbReference type="FunFam" id="1.10.1140.10:FF:000001">
    <property type="entry name" value="ATP synthase subunit beta"/>
    <property type="match status" value="1"/>
</dbReference>
<dbReference type="FunFam" id="3.40.50.300:FF:000004">
    <property type="entry name" value="ATP synthase subunit beta"/>
    <property type="match status" value="1"/>
</dbReference>
<dbReference type="Gene3D" id="2.40.10.170">
    <property type="match status" value="1"/>
</dbReference>
<dbReference type="Gene3D" id="1.10.1140.10">
    <property type="entry name" value="Bovine Mitochondrial F1-atpase, Atp Synthase Beta Chain, Chain D, domain 3"/>
    <property type="match status" value="1"/>
</dbReference>
<dbReference type="Gene3D" id="3.40.50.300">
    <property type="entry name" value="P-loop containing nucleotide triphosphate hydrolases"/>
    <property type="match status" value="1"/>
</dbReference>
<dbReference type="HAMAP" id="MF_01347">
    <property type="entry name" value="ATP_synth_beta_bact"/>
    <property type="match status" value="1"/>
</dbReference>
<dbReference type="InterPro" id="IPR003593">
    <property type="entry name" value="AAA+_ATPase"/>
</dbReference>
<dbReference type="InterPro" id="IPR055190">
    <property type="entry name" value="ATP-synt_VA_C"/>
</dbReference>
<dbReference type="InterPro" id="IPR005722">
    <property type="entry name" value="ATP_synth_F1_bsu"/>
</dbReference>
<dbReference type="InterPro" id="IPR020003">
    <property type="entry name" value="ATPase_a/bsu_AS"/>
</dbReference>
<dbReference type="InterPro" id="IPR050053">
    <property type="entry name" value="ATPase_alpha/beta_chains"/>
</dbReference>
<dbReference type="InterPro" id="IPR004100">
    <property type="entry name" value="ATPase_F1/V1/A1_a/bsu_N"/>
</dbReference>
<dbReference type="InterPro" id="IPR036121">
    <property type="entry name" value="ATPase_F1/V1/A1_a/bsu_N_sf"/>
</dbReference>
<dbReference type="InterPro" id="IPR000194">
    <property type="entry name" value="ATPase_F1/V1/A1_a/bsu_nucl-bd"/>
</dbReference>
<dbReference type="InterPro" id="IPR024034">
    <property type="entry name" value="ATPase_F1/V1_b/a_C"/>
</dbReference>
<dbReference type="InterPro" id="IPR027417">
    <property type="entry name" value="P-loop_NTPase"/>
</dbReference>
<dbReference type="NCBIfam" id="TIGR01039">
    <property type="entry name" value="atpD"/>
    <property type="match status" value="1"/>
</dbReference>
<dbReference type="PANTHER" id="PTHR15184">
    <property type="entry name" value="ATP SYNTHASE"/>
    <property type="match status" value="1"/>
</dbReference>
<dbReference type="PANTHER" id="PTHR15184:SF71">
    <property type="entry name" value="ATP SYNTHASE SUBUNIT BETA, MITOCHONDRIAL"/>
    <property type="match status" value="1"/>
</dbReference>
<dbReference type="Pfam" id="PF00006">
    <property type="entry name" value="ATP-synt_ab"/>
    <property type="match status" value="1"/>
</dbReference>
<dbReference type="Pfam" id="PF02874">
    <property type="entry name" value="ATP-synt_ab_N"/>
    <property type="match status" value="1"/>
</dbReference>
<dbReference type="Pfam" id="PF22919">
    <property type="entry name" value="ATP-synt_VA_C"/>
    <property type="match status" value="1"/>
</dbReference>
<dbReference type="SMART" id="SM00382">
    <property type="entry name" value="AAA"/>
    <property type="match status" value="1"/>
</dbReference>
<dbReference type="SUPFAM" id="SSF47917">
    <property type="entry name" value="C-terminal domain of alpha and beta subunits of F1 ATP synthase"/>
    <property type="match status" value="1"/>
</dbReference>
<dbReference type="SUPFAM" id="SSF50615">
    <property type="entry name" value="N-terminal domain of alpha and beta subunits of F1 ATP synthase"/>
    <property type="match status" value="1"/>
</dbReference>
<dbReference type="SUPFAM" id="SSF52540">
    <property type="entry name" value="P-loop containing nucleoside triphosphate hydrolases"/>
    <property type="match status" value="1"/>
</dbReference>
<dbReference type="PROSITE" id="PS00152">
    <property type="entry name" value="ATPASE_ALPHA_BETA"/>
    <property type="match status" value="1"/>
</dbReference>
<feature type="chain" id="PRO_0000254415" description="ATP synthase subunit beta">
    <location>
        <begin position="1"/>
        <end position="459"/>
    </location>
</feature>
<feature type="binding site" evidence="1">
    <location>
        <begin position="147"/>
        <end position="154"/>
    </location>
    <ligand>
        <name>ATP</name>
        <dbReference type="ChEBI" id="CHEBI:30616"/>
    </ligand>
</feature>
<evidence type="ECO:0000255" key="1">
    <source>
        <dbReference type="HAMAP-Rule" id="MF_01347"/>
    </source>
</evidence>
<reference key="1">
    <citation type="journal article" date="2006" name="PLoS Biol.">
        <title>The genome of deep-sea vent chemolithoautotroph Thiomicrospira crunogena XCL-2.</title>
        <authorList>
            <person name="Scott K.M."/>
            <person name="Sievert S.M."/>
            <person name="Abril F.N."/>
            <person name="Ball L.A."/>
            <person name="Barrett C.J."/>
            <person name="Blake R.A."/>
            <person name="Boller A.J."/>
            <person name="Chain P.S.G."/>
            <person name="Clark J.A."/>
            <person name="Davis C.R."/>
            <person name="Detter C."/>
            <person name="Do K.F."/>
            <person name="Dobrinski K.P."/>
            <person name="Faza B.I."/>
            <person name="Fitzpatrick K.A."/>
            <person name="Freyermuth S.K."/>
            <person name="Harmer T.L."/>
            <person name="Hauser L.J."/>
            <person name="Huegler M."/>
            <person name="Kerfeld C.A."/>
            <person name="Klotz M.G."/>
            <person name="Kong W.W."/>
            <person name="Land M."/>
            <person name="Lapidus A."/>
            <person name="Larimer F.W."/>
            <person name="Longo D.L."/>
            <person name="Lucas S."/>
            <person name="Malfatti S.A."/>
            <person name="Massey S.E."/>
            <person name="Martin D.D."/>
            <person name="McCuddin Z."/>
            <person name="Meyer F."/>
            <person name="Moore J.L."/>
            <person name="Ocampo L.H. Jr."/>
            <person name="Paul J.H."/>
            <person name="Paulsen I.T."/>
            <person name="Reep D.K."/>
            <person name="Ren Q."/>
            <person name="Ross R.L."/>
            <person name="Sato P.Y."/>
            <person name="Thomas P."/>
            <person name="Tinkham L.E."/>
            <person name="Zeruth G.T."/>
        </authorList>
    </citation>
    <scope>NUCLEOTIDE SEQUENCE [LARGE SCALE GENOMIC DNA]</scope>
    <source>
        <strain>DSM 25203 / XCL-2</strain>
    </source>
</reference>
<sequence length="459" mass="50242">MNGKIVQIIGPVIDVEFKGADLPKIYDALKVDELDLTLEVQQQVGDNVVRAIAMGSSDGLKRGMAVSNTGEAISVPVGKPTLGRIFDVLGNPIDNAGPVESEEKMTIHRPAPAFDELAASQELLETGVKVIDLICPFAKGGKVGLFGGAGVGKTVNMMELIRNIAIEHSGYSVFAGVGERTREGNDFYYEMEESGVLDKVALVYGQMNEPPGNRLRVALTGLTMAEYFRDEGRDILFFVDNIYRYTLAGTEVSALLGRMPSAVGYQPTLSQEMGQIQERITSTKTGSITSIQAVYVPADDLTDPAPATTFAHLDATVVLNRSIAETGIYPAIDPLDSTSRQLDPLVVGSEHYDTARGVQETLQRYKELKDIIAILGMDELSEEDRSLVARARKMQRFFSQPYFVAKVFTGEDGRYVPLKETLRGFKMIISGELDDIPEQAFMYAGDIDEVLEKAKKYKD</sequence>
<name>ATPB_HYDCU</name>
<keyword id="KW-0066">ATP synthesis</keyword>
<keyword id="KW-0067">ATP-binding</keyword>
<keyword id="KW-0997">Cell inner membrane</keyword>
<keyword id="KW-1003">Cell membrane</keyword>
<keyword id="KW-0139">CF(1)</keyword>
<keyword id="KW-0375">Hydrogen ion transport</keyword>
<keyword id="KW-0406">Ion transport</keyword>
<keyword id="KW-0472">Membrane</keyword>
<keyword id="KW-0547">Nucleotide-binding</keyword>
<keyword id="KW-1278">Translocase</keyword>
<keyword id="KW-0813">Transport</keyword>
<proteinExistence type="inferred from homology"/>
<protein>
    <recommendedName>
        <fullName evidence="1">ATP synthase subunit beta</fullName>
        <ecNumber evidence="1">7.1.2.2</ecNumber>
    </recommendedName>
    <alternativeName>
        <fullName evidence="1">ATP synthase F1 sector subunit beta</fullName>
    </alternativeName>
    <alternativeName>
        <fullName evidence="1">F-ATPase subunit beta</fullName>
    </alternativeName>
</protein>
<organism>
    <name type="scientific">Hydrogenovibrio crunogenus (strain DSM 25203 / XCL-2)</name>
    <name type="common">Thiomicrospira crunogena</name>
    <dbReference type="NCBI Taxonomy" id="317025"/>
    <lineage>
        <taxon>Bacteria</taxon>
        <taxon>Pseudomonadati</taxon>
        <taxon>Pseudomonadota</taxon>
        <taxon>Gammaproteobacteria</taxon>
        <taxon>Thiotrichales</taxon>
        <taxon>Piscirickettsiaceae</taxon>
        <taxon>Hydrogenovibrio</taxon>
    </lineage>
</organism>